<accession>B8CSC8</accession>
<dbReference type="EMBL" id="CP000472">
    <property type="protein sequence ID" value="ACJ30418.1"/>
    <property type="molecule type" value="Genomic_DNA"/>
</dbReference>
<dbReference type="RefSeq" id="WP_020913762.1">
    <property type="nucleotide sequence ID" value="NC_011566.1"/>
</dbReference>
<dbReference type="SMR" id="B8CSC8"/>
<dbReference type="STRING" id="225849.swp_3736"/>
<dbReference type="KEGG" id="swp:swp_3736"/>
<dbReference type="eggNOG" id="COG3022">
    <property type="taxonomic scope" value="Bacteria"/>
</dbReference>
<dbReference type="HOGENOM" id="CLU_061989_0_0_6"/>
<dbReference type="OrthoDB" id="9777133at2"/>
<dbReference type="Proteomes" id="UP000000753">
    <property type="component" value="Chromosome"/>
</dbReference>
<dbReference type="GO" id="GO:0005829">
    <property type="term" value="C:cytosol"/>
    <property type="evidence" value="ECO:0007669"/>
    <property type="project" value="TreeGrafter"/>
</dbReference>
<dbReference type="GO" id="GO:0033194">
    <property type="term" value="P:response to hydroperoxide"/>
    <property type="evidence" value="ECO:0007669"/>
    <property type="project" value="TreeGrafter"/>
</dbReference>
<dbReference type="HAMAP" id="MF_00652">
    <property type="entry name" value="UPF0246"/>
    <property type="match status" value="1"/>
</dbReference>
<dbReference type="InterPro" id="IPR005583">
    <property type="entry name" value="YaaA"/>
</dbReference>
<dbReference type="NCBIfam" id="NF002541">
    <property type="entry name" value="PRK02101.1-1"/>
    <property type="match status" value="1"/>
</dbReference>
<dbReference type="NCBIfam" id="NF002542">
    <property type="entry name" value="PRK02101.1-3"/>
    <property type="match status" value="1"/>
</dbReference>
<dbReference type="PANTHER" id="PTHR30283:SF4">
    <property type="entry name" value="PEROXIDE STRESS RESISTANCE PROTEIN YAAA"/>
    <property type="match status" value="1"/>
</dbReference>
<dbReference type="PANTHER" id="PTHR30283">
    <property type="entry name" value="PEROXIDE STRESS RESPONSE PROTEIN YAAA"/>
    <property type="match status" value="1"/>
</dbReference>
<dbReference type="Pfam" id="PF03883">
    <property type="entry name" value="H2O2_YaaD"/>
    <property type="match status" value="1"/>
</dbReference>
<evidence type="ECO:0000255" key="1">
    <source>
        <dbReference type="HAMAP-Rule" id="MF_00652"/>
    </source>
</evidence>
<comment type="similarity">
    <text evidence="1">Belongs to the UPF0246 family.</text>
</comment>
<gene>
    <name type="ordered locus">swp_3736</name>
</gene>
<feature type="chain" id="PRO_1000131144" description="UPF0246 protein swp_3736">
    <location>
        <begin position="1"/>
        <end position="257"/>
    </location>
</feature>
<proteinExistence type="inferred from homology"/>
<name>Y3736_SHEPW</name>
<protein>
    <recommendedName>
        <fullName evidence="1">UPF0246 protein swp_3736</fullName>
    </recommendedName>
</protein>
<reference key="1">
    <citation type="journal article" date="2008" name="PLoS ONE">
        <title>Environmental adaptation: genomic analysis of the piezotolerant and psychrotolerant deep-sea iron reducing bacterium Shewanella piezotolerans WP3.</title>
        <authorList>
            <person name="Wang F."/>
            <person name="Wang J."/>
            <person name="Jian H."/>
            <person name="Zhang B."/>
            <person name="Li S."/>
            <person name="Wang F."/>
            <person name="Zeng X."/>
            <person name="Gao L."/>
            <person name="Bartlett D.H."/>
            <person name="Yu J."/>
            <person name="Hu S."/>
            <person name="Xiao X."/>
        </authorList>
    </citation>
    <scope>NUCLEOTIDE SEQUENCE [LARGE SCALE GENOMIC DNA]</scope>
    <source>
        <strain>WP3 / JCM 13877</strain>
    </source>
</reference>
<sequence length="257" mass="28688">MLILVSPAKTLDFENPAATQSYSIPTLLGQSEQLIDVCRKLTPSDIASLMKVSDKIAGLNVARFSSWDSDFTPDNAKQAVFAFRGDVYTGLDADTLSEASLQKAQQQLRILSGLYGLLKPLDLMQAYRLEMGTRLSNARGTNLYQFWGDIITDEINQTTAAQGDEFIINLASNEYFKAVKHKQLTANLVTPVFKDKKNGQYKVISFFAKKARGMMVRYILDNNVESLDALIKFDSAGYYYSEAESTVTAPVFLREEQ</sequence>
<organism>
    <name type="scientific">Shewanella piezotolerans (strain WP3 / JCM 13877)</name>
    <dbReference type="NCBI Taxonomy" id="225849"/>
    <lineage>
        <taxon>Bacteria</taxon>
        <taxon>Pseudomonadati</taxon>
        <taxon>Pseudomonadota</taxon>
        <taxon>Gammaproteobacteria</taxon>
        <taxon>Alteromonadales</taxon>
        <taxon>Shewanellaceae</taxon>
        <taxon>Shewanella</taxon>
    </lineage>
</organism>